<organism>
    <name type="scientific">Bos taurus</name>
    <name type="common">Bovine</name>
    <dbReference type="NCBI Taxonomy" id="9913"/>
    <lineage>
        <taxon>Eukaryota</taxon>
        <taxon>Metazoa</taxon>
        <taxon>Chordata</taxon>
        <taxon>Craniata</taxon>
        <taxon>Vertebrata</taxon>
        <taxon>Euteleostomi</taxon>
        <taxon>Mammalia</taxon>
        <taxon>Eutheria</taxon>
        <taxon>Laurasiatheria</taxon>
        <taxon>Artiodactyla</taxon>
        <taxon>Ruminantia</taxon>
        <taxon>Pecora</taxon>
        <taxon>Bovidae</taxon>
        <taxon>Bovinae</taxon>
        <taxon>Bos</taxon>
    </lineage>
</organism>
<keyword id="KW-0238">DNA-binding</keyword>
<keyword id="KW-1017">Isopeptide bond</keyword>
<keyword id="KW-0479">Metal-binding</keyword>
<keyword id="KW-0539">Nucleus</keyword>
<keyword id="KW-1185">Reference proteome</keyword>
<keyword id="KW-0677">Repeat</keyword>
<keyword id="KW-0804">Transcription</keyword>
<keyword id="KW-0805">Transcription regulation</keyword>
<keyword id="KW-0832">Ubl conjugation</keyword>
<keyword id="KW-0862">Zinc</keyword>
<keyword id="KW-0863">Zinc-finger</keyword>
<sequence length="567" mass="64684">MSSRLGAVPATPGPTPFKQQRSTRIVGAKNSRTQCSIKDNSFQYTIPHDDSLSGSSSASSCEPVSDFPASFRKSTYWMKMRRIKSAAASHVEGPGGVSTKGKRKPRQEEDEDYREFPQKKHKLYGRKQRPKAQPNPKAQTRRIRKEPPAYAAGSLEEQWYLEIVDKGSVSCPTCQAVGRKTIEGLKKHMENCKQEMFTCHHCGKQLRSLAGMKYHVMANHNSLPILKAGDEIDEPSERERLRTVLKRLGKLRCMRESCSSSFTSIMGYLYHVRKCGKGAAELEKMTLKCHHCGKPYRSKAGLAYHLRSEHGPISFFPESGQPECLKDMSLESKSGGRVQRRSAKIAVYHLQELASAELAKEWPKRKVLQDLVPDDRKLKYTRPGLPTFSQEVLHKWKSDIKKYHRIQCPNQGCEAVYSSVSGLKAHLGSCTLGTFVAGKYKCLLCQKEFVSESGVKYHINSVHAEDWFVVNPTTTKSFEKLMKIKQRQQEEEKRRQQHRSRRSLRRRQQPGIELPETEPSLRVGKDQRRNHEELLVATSRKEPEQEPVPTQFQKVRSPKTNHKRGKK</sequence>
<evidence type="ECO:0000250" key="1"/>
<evidence type="ECO:0000250" key="2">
    <source>
        <dbReference type="UniProtKB" id="Q96ME7"/>
    </source>
</evidence>
<evidence type="ECO:0000255" key="3">
    <source>
        <dbReference type="PROSITE-ProRule" id="PRU00042"/>
    </source>
</evidence>
<evidence type="ECO:0000256" key="4">
    <source>
        <dbReference type="SAM" id="MobiDB-lite"/>
    </source>
</evidence>
<evidence type="ECO:0000305" key="5"/>
<comment type="function">
    <text evidence="1">May be involved in transcriptional regulation.</text>
</comment>
<comment type="subcellular location">
    <subcellularLocation>
        <location evidence="5">Nucleus</location>
    </subcellularLocation>
</comment>
<comment type="similarity">
    <text evidence="5">Belongs to the krueppel C2H2-type zinc-finger protein family.</text>
</comment>
<name>ZN512_BOVIN</name>
<protein>
    <recommendedName>
        <fullName>Zinc finger protein 512</fullName>
    </recommendedName>
</protein>
<reference key="1">
    <citation type="submission" date="2006-09" db="EMBL/GenBank/DDBJ databases">
        <authorList>
            <consortium name="NIH - Mammalian Gene Collection (MGC) project"/>
        </authorList>
    </citation>
    <scope>NUCLEOTIDE SEQUENCE [LARGE SCALE MRNA]</scope>
    <source>
        <strain>Hereford</strain>
        <tissue>Thalamus</tissue>
    </source>
</reference>
<accession>A4FV61</accession>
<proteinExistence type="evidence at transcript level"/>
<gene>
    <name type="primary">ZNF512</name>
</gene>
<feature type="chain" id="PRO_0000333736" description="Zinc finger protein 512">
    <location>
        <begin position="1"/>
        <end position="567"/>
    </location>
</feature>
<feature type="zinc finger region" description="C2H2-type 1" evidence="3">
    <location>
        <begin position="197"/>
        <end position="220"/>
    </location>
</feature>
<feature type="zinc finger region" description="C2H2-type 2" evidence="3">
    <location>
        <begin position="287"/>
        <end position="310"/>
    </location>
</feature>
<feature type="zinc finger region" description="C2H2-type 3; atypical" evidence="3">
    <location>
        <begin position="406"/>
        <end position="430"/>
    </location>
</feature>
<feature type="zinc finger region" description="C2H2-type 3" evidence="3">
    <location>
        <begin position="440"/>
        <end position="463"/>
    </location>
</feature>
<feature type="region of interest" description="Disordered" evidence="4">
    <location>
        <begin position="1"/>
        <end position="34"/>
    </location>
</feature>
<feature type="region of interest" description="Disordered" evidence="4">
    <location>
        <begin position="87"/>
        <end position="148"/>
    </location>
</feature>
<feature type="region of interest" description="Disordered" evidence="4">
    <location>
        <begin position="485"/>
        <end position="567"/>
    </location>
</feature>
<feature type="compositionally biased region" description="Basic residues" evidence="4">
    <location>
        <begin position="119"/>
        <end position="130"/>
    </location>
</feature>
<feature type="compositionally biased region" description="Basic and acidic residues" evidence="4">
    <location>
        <begin position="485"/>
        <end position="494"/>
    </location>
</feature>
<feature type="compositionally biased region" description="Basic residues" evidence="4">
    <location>
        <begin position="495"/>
        <end position="508"/>
    </location>
</feature>
<feature type="compositionally biased region" description="Basic and acidic residues" evidence="4">
    <location>
        <begin position="523"/>
        <end position="544"/>
    </location>
</feature>
<feature type="compositionally biased region" description="Basic residues" evidence="4">
    <location>
        <begin position="556"/>
        <end position="567"/>
    </location>
</feature>
<feature type="cross-link" description="Glycyl lysine isopeptide (Lys-Gly) (interchain with G-Cter in SUMO2)" evidence="2">
    <location>
        <position position="18"/>
    </location>
</feature>
<feature type="cross-link" description="Glycyl lysine isopeptide (Lys-Gly) (interchain with G-Cter in SUMO2)" evidence="2">
    <location>
        <position position="84"/>
    </location>
</feature>
<feature type="cross-link" description="Glycyl lysine isopeptide (Lys-Gly) (interchain with G-Cter in SUMO2)" evidence="2">
    <location>
        <position position="227"/>
    </location>
</feature>
<feature type="cross-link" description="Glycyl lysine isopeptide (Lys-Gly) (interchain with G-Cter in SUMO2)" evidence="2">
    <location>
        <position position="333"/>
    </location>
</feature>
<dbReference type="EMBL" id="BC123776">
    <property type="protein sequence ID" value="AAI23777.1"/>
    <property type="molecule type" value="mRNA"/>
</dbReference>
<dbReference type="RefSeq" id="NP_001076941.1">
    <property type="nucleotide sequence ID" value="NM_001083472.1"/>
</dbReference>
<dbReference type="FunCoup" id="A4FV61">
    <property type="interactions" value="3682"/>
</dbReference>
<dbReference type="STRING" id="9913.ENSBTAP00000032885"/>
<dbReference type="PaxDb" id="9913-ENSBTAP00000032885"/>
<dbReference type="GeneID" id="533884"/>
<dbReference type="KEGG" id="bta:533884"/>
<dbReference type="CTD" id="84450"/>
<dbReference type="VEuPathDB" id="HostDB:ENSBTAG00000003902"/>
<dbReference type="eggNOG" id="KOG1721">
    <property type="taxonomic scope" value="Eukaryota"/>
</dbReference>
<dbReference type="HOGENOM" id="CLU_481412_0_0_1"/>
<dbReference type="InParanoid" id="A4FV61"/>
<dbReference type="OMA" id="SVEEQWY"/>
<dbReference type="OrthoDB" id="9949647at2759"/>
<dbReference type="TreeFam" id="TF331185"/>
<dbReference type="Proteomes" id="UP000009136">
    <property type="component" value="Chromosome 11"/>
</dbReference>
<dbReference type="Bgee" id="ENSBTAG00000003902">
    <property type="expression patterns" value="Expressed in thymus and 108 other cell types or tissues"/>
</dbReference>
<dbReference type="GO" id="GO:0005634">
    <property type="term" value="C:nucleus"/>
    <property type="evidence" value="ECO:0007669"/>
    <property type="project" value="UniProtKB-SubCell"/>
</dbReference>
<dbReference type="GO" id="GO:0003677">
    <property type="term" value="F:DNA binding"/>
    <property type="evidence" value="ECO:0007669"/>
    <property type="project" value="UniProtKB-KW"/>
</dbReference>
<dbReference type="GO" id="GO:0008270">
    <property type="term" value="F:zinc ion binding"/>
    <property type="evidence" value="ECO:0007669"/>
    <property type="project" value="UniProtKB-KW"/>
</dbReference>
<dbReference type="FunFam" id="3.30.160.60:FF:000177">
    <property type="entry name" value="Zinc finger protein 512"/>
    <property type="match status" value="1"/>
</dbReference>
<dbReference type="FunFam" id="3.30.160.60:FF:000270">
    <property type="entry name" value="Zinc finger protein 512"/>
    <property type="match status" value="1"/>
</dbReference>
<dbReference type="FunFam" id="3.30.160.60:FF:000580">
    <property type="entry name" value="Zinc finger protein 512"/>
    <property type="match status" value="1"/>
</dbReference>
<dbReference type="Gene3D" id="3.30.160.60">
    <property type="entry name" value="Classic Zinc Finger"/>
    <property type="match status" value="3"/>
</dbReference>
<dbReference type="InterPro" id="IPR052274">
    <property type="entry name" value="Krueppel_C2H2_Zn-finger"/>
</dbReference>
<dbReference type="InterPro" id="IPR048408">
    <property type="entry name" value="ZNF512_C2HC"/>
</dbReference>
<dbReference type="InterPro" id="IPR048403">
    <property type="entry name" value="ZNF512_znf-C2H2"/>
</dbReference>
<dbReference type="InterPro" id="IPR036236">
    <property type="entry name" value="Znf_C2H2_sf"/>
</dbReference>
<dbReference type="InterPro" id="IPR013087">
    <property type="entry name" value="Znf_C2H2_type"/>
</dbReference>
<dbReference type="PANTHER" id="PTHR22979:SF2">
    <property type="entry name" value="ZINC FINGER PROTEIN 512"/>
    <property type="match status" value="1"/>
</dbReference>
<dbReference type="PANTHER" id="PTHR22979">
    <property type="entry name" value="ZINC FINGER PROTEIN-RELATED"/>
    <property type="match status" value="1"/>
</dbReference>
<dbReference type="Pfam" id="PF00096">
    <property type="entry name" value="zf-C2H2"/>
    <property type="match status" value="1"/>
</dbReference>
<dbReference type="Pfam" id="PF21276">
    <property type="entry name" value="ZNF512_C2HC"/>
    <property type="match status" value="2"/>
</dbReference>
<dbReference type="Pfam" id="PF21367">
    <property type="entry name" value="ZNF512_zf-C2H2"/>
    <property type="match status" value="1"/>
</dbReference>
<dbReference type="SMART" id="SM00355">
    <property type="entry name" value="ZnF_C2H2"/>
    <property type="match status" value="4"/>
</dbReference>
<dbReference type="SUPFAM" id="SSF57667">
    <property type="entry name" value="beta-beta-alpha zinc fingers"/>
    <property type="match status" value="5"/>
</dbReference>
<dbReference type="PROSITE" id="PS00028">
    <property type="entry name" value="ZINC_FINGER_C2H2_1"/>
    <property type="match status" value="3"/>
</dbReference>
<dbReference type="PROSITE" id="PS50157">
    <property type="entry name" value="ZINC_FINGER_C2H2_2"/>
    <property type="match status" value="2"/>
</dbReference>